<keyword id="KW-1185">Reference proteome</keyword>
<sequence length="53" mass="6359">MMDDLQDVSRLREAYQFYQKAKQDEDSIVCGCLNDAYEWLFSELKALFDEEEE</sequence>
<proteinExistence type="uncertain"/>
<dbReference type="EMBL" id="L42023">
    <property type="protein sequence ID" value="AAC23139.1"/>
    <property type="molecule type" value="Genomic_DNA"/>
</dbReference>
<dbReference type="PIR" id="E64031">
    <property type="entry name" value="E64031"/>
</dbReference>
<dbReference type="SMR" id="P44211"/>
<dbReference type="STRING" id="71421.HI_1484"/>
<dbReference type="EnsemblBacteria" id="AAC23139">
    <property type="protein sequence ID" value="AAC23139"/>
    <property type="gene ID" value="HI_1484"/>
</dbReference>
<dbReference type="KEGG" id="hin:HI_1484"/>
<dbReference type="eggNOG" id="ENOG5031KE6">
    <property type="taxonomic scope" value="Bacteria"/>
</dbReference>
<dbReference type="HOGENOM" id="CLU_3099177_0_0_6"/>
<dbReference type="Proteomes" id="UP000000579">
    <property type="component" value="Chromosome"/>
</dbReference>
<evidence type="ECO:0000305" key="1"/>
<protein>
    <recommendedName>
        <fullName>Putative uncharacterized protein HI_1484 in Mu-like prophage FluMu region</fullName>
    </recommendedName>
</protein>
<organism>
    <name type="scientific">Haemophilus influenzae (strain ATCC 51907 / DSM 11121 / KW20 / Rd)</name>
    <dbReference type="NCBI Taxonomy" id="71421"/>
    <lineage>
        <taxon>Bacteria</taxon>
        <taxon>Pseudomonadati</taxon>
        <taxon>Pseudomonadota</taxon>
        <taxon>Gammaproteobacteria</taxon>
        <taxon>Pasteurellales</taxon>
        <taxon>Pasteurellaceae</taxon>
        <taxon>Haemophilus</taxon>
    </lineage>
</organism>
<feature type="chain" id="PRO_0000078068" description="Putative uncharacterized protein HI_1484 in Mu-like prophage FluMu region">
    <location>
        <begin position="1"/>
        <end position="53"/>
    </location>
</feature>
<reference key="1">
    <citation type="journal article" date="1995" name="Science">
        <title>Whole-genome random sequencing and assembly of Haemophilus influenzae Rd.</title>
        <authorList>
            <person name="Fleischmann R.D."/>
            <person name="Adams M.D."/>
            <person name="White O."/>
            <person name="Clayton R.A."/>
            <person name="Kirkness E.F."/>
            <person name="Kerlavage A.R."/>
            <person name="Bult C.J."/>
            <person name="Tomb J.-F."/>
            <person name="Dougherty B.A."/>
            <person name="Merrick J.M."/>
            <person name="McKenney K."/>
            <person name="Sutton G.G."/>
            <person name="FitzHugh W."/>
            <person name="Fields C.A."/>
            <person name="Gocayne J.D."/>
            <person name="Scott J.D."/>
            <person name="Shirley R."/>
            <person name="Liu L.-I."/>
            <person name="Glodek A."/>
            <person name="Kelley J.M."/>
            <person name="Weidman J.F."/>
            <person name="Phillips C.A."/>
            <person name="Spriggs T."/>
            <person name="Hedblom E."/>
            <person name="Cotton M.D."/>
            <person name="Utterback T.R."/>
            <person name="Hanna M.C."/>
            <person name="Nguyen D.T."/>
            <person name="Saudek D.M."/>
            <person name="Brandon R.C."/>
            <person name="Fine L.D."/>
            <person name="Fritchman J.L."/>
            <person name="Fuhrmann J.L."/>
            <person name="Geoghagen N.S.M."/>
            <person name="Gnehm C.L."/>
            <person name="McDonald L.A."/>
            <person name="Small K.V."/>
            <person name="Fraser C.M."/>
            <person name="Smith H.O."/>
            <person name="Venter J.C."/>
        </authorList>
    </citation>
    <scope>NUCLEOTIDE SEQUENCE [LARGE SCALE GENOMIC DNA]</scope>
    <source>
        <strain>ATCC 51907 / DSM 11121 / KW20 / Rd</strain>
    </source>
</reference>
<accession>P44211</accession>
<comment type="caution">
    <text evidence="1">Could be the product of a pseudogene.</text>
</comment>
<name>Y1484_HAEIN</name>
<gene>
    <name type="ordered locus">HI_1484</name>
</gene>